<sequence>MSRKPLIAGNWKMNLNHYEAIALVQKIAFSLPDKYYDRVDVAVIPPFTDLRSVQTLVDGDKLRLTYGAQDLSPHDSGAYTGDVSGAFLAKLGCSYVVVGHSERRTYHNEDDALVAAKAATALKHGLTPIVCIGEHLDVREAGNHVAHNIEQLRGSLAGLLAEQIGSVVTAYEPVWAIGTGRVASAADAQEVCAAIRKELASLASPRIADTVRVLYGGSVNAKNVGDIVAQDDVDGGLVGGASLDGEHFATLAAIAAGGPLP</sequence>
<reference key="1">
    <citation type="journal article" date="2007" name="Proc. Natl. Acad. Sci. U.S.A.">
        <title>Genome plasticity of BCG and impact on vaccine efficacy.</title>
        <authorList>
            <person name="Brosch R."/>
            <person name="Gordon S.V."/>
            <person name="Garnier T."/>
            <person name="Eiglmeier K."/>
            <person name="Frigui W."/>
            <person name="Valenti P."/>
            <person name="Dos Santos S."/>
            <person name="Duthoy S."/>
            <person name="Lacroix C."/>
            <person name="Garcia-Pelayo C."/>
            <person name="Inwald J.K."/>
            <person name="Golby P."/>
            <person name="Garcia J.N."/>
            <person name="Hewinson R.G."/>
            <person name="Behr M.A."/>
            <person name="Quail M.A."/>
            <person name="Churcher C."/>
            <person name="Barrell B.G."/>
            <person name="Parkhill J."/>
            <person name="Cole S.T."/>
        </authorList>
    </citation>
    <scope>NUCLEOTIDE SEQUENCE [LARGE SCALE GENOMIC DNA]</scope>
    <source>
        <strain>BCG / Pasteur 1173P2</strain>
    </source>
</reference>
<protein>
    <recommendedName>
        <fullName evidence="1">Triosephosphate isomerase</fullName>
        <shortName evidence="1">TIM</shortName>
        <shortName evidence="1">TPI</shortName>
        <ecNumber evidence="1">5.3.1.1</ecNumber>
    </recommendedName>
    <alternativeName>
        <fullName evidence="1">Triose-phosphate isomerase</fullName>
    </alternativeName>
</protein>
<organism>
    <name type="scientific">Mycobacterium bovis (strain BCG / Pasteur 1173P2)</name>
    <dbReference type="NCBI Taxonomy" id="410289"/>
    <lineage>
        <taxon>Bacteria</taxon>
        <taxon>Bacillati</taxon>
        <taxon>Actinomycetota</taxon>
        <taxon>Actinomycetes</taxon>
        <taxon>Mycobacteriales</taxon>
        <taxon>Mycobacteriaceae</taxon>
        <taxon>Mycobacterium</taxon>
        <taxon>Mycobacterium tuberculosis complex</taxon>
    </lineage>
</organism>
<dbReference type="EC" id="5.3.1.1" evidence="1"/>
<dbReference type="EMBL" id="AM408590">
    <property type="protein sequence ID" value="CAL71486.1"/>
    <property type="molecule type" value="Genomic_DNA"/>
</dbReference>
<dbReference type="RefSeq" id="WP_011799181.1">
    <property type="nucleotide sequence ID" value="NC_008769.1"/>
</dbReference>
<dbReference type="SMR" id="A1KIM7"/>
<dbReference type="KEGG" id="mbb:BCG_1499"/>
<dbReference type="HOGENOM" id="CLU_024251_2_3_11"/>
<dbReference type="UniPathway" id="UPA00109">
    <property type="reaction ID" value="UER00189"/>
</dbReference>
<dbReference type="UniPathway" id="UPA00138"/>
<dbReference type="Proteomes" id="UP000001472">
    <property type="component" value="Chromosome"/>
</dbReference>
<dbReference type="GO" id="GO:0005829">
    <property type="term" value="C:cytosol"/>
    <property type="evidence" value="ECO:0007669"/>
    <property type="project" value="TreeGrafter"/>
</dbReference>
<dbReference type="GO" id="GO:0004807">
    <property type="term" value="F:triose-phosphate isomerase activity"/>
    <property type="evidence" value="ECO:0007669"/>
    <property type="project" value="UniProtKB-UniRule"/>
</dbReference>
<dbReference type="GO" id="GO:0006094">
    <property type="term" value="P:gluconeogenesis"/>
    <property type="evidence" value="ECO:0007669"/>
    <property type="project" value="UniProtKB-UniRule"/>
</dbReference>
<dbReference type="GO" id="GO:0046166">
    <property type="term" value="P:glyceraldehyde-3-phosphate biosynthetic process"/>
    <property type="evidence" value="ECO:0007669"/>
    <property type="project" value="TreeGrafter"/>
</dbReference>
<dbReference type="GO" id="GO:0019563">
    <property type="term" value="P:glycerol catabolic process"/>
    <property type="evidence" value="ECO:0007669"/>
    <property type="project" value="TreeGrafter"/>
</dbReference>
<dbReference type="GO" id="GO:0006096">
    <property type="term" value="P:glycolytic process"/>
    <property type="evidence" value="ECO:0007669"/>
    <property type="project" value="UniProtKB-UniRule"/>
</dbReference>
<dbReference type="CDD" id="cd00311">
    <property type="entry name" value="TIM"/>
    <property type="match status" value="1"/>
</dbReference>
<dbReference type="FunFam" id="3.20.20.70:FF:000020">
    <property type="entry name" value="Triosephosphate isomerase"/>
    <property type="match status" value="1"/>
</dbReference>
<dbReference type="Gene3D" id="3.20.20.70">
    <property type="entry name" value="Aldolase class I"/>
    <property type="match status" value="1"/>
</dbReference>
<dbReference type="HAMAP" id="MF_00147_B">
    <property type="entry name" value="TIM_B"/>
    <property type="match status" value="1"/>
</dbReference>
<dbReference type="InterPro" id="IPR013785">
    <property type="entry name" value="Aldolase_TIM"/>
</dbReference>
<dbReference type="InterPro" id="IPR035990">
    <property type="entry name" value="TIM_sf"/>
</dbReference>
<dbReference type="InterPro" id="IPR022896">
    <property type="entry name" value="TrioseP_Isoase_bac/euk"/>
</dbReference>
<dbReference type="InterPro" id="IPR000652">
    <property type="entry name" value="Triosephosphate_isomerase"/>
</dbReference>
<dbReference type="InterPro" id="IPR020861">
    <property type="entry name" value="Triosephosphate_isomerase_AS"/>
</dbReference>
<dbReference type="NCBIfam" id="TIGR00419">
    <property type="entry name" value="tim"/>
    <property type="match status" value="1"/>
</dbReference>
<dbReference type="PANTHER" id="PTHR21139">
    <property type="entry name" value="TRIOSEPHOSPHATE ISOMERASE"/>
    <property type="match status" value="1"/>
</dbReference>
<dbReference type="PANTHER" id="PTHR21139:SF42">
    <property type="entry name" value="TRIOSEPHOSPHATE ISOMERASE"/>
    <property type="match status" value="1"/>
</dbReference>
<dbReference type="Pfam" id="PF00121">
    <property type="entry name" value="TIM"/>
    <property type="match status" value="1"/>
</dbReference>
<dbReference type="SUPFAM" id="SSF51351">
    <property type="entry name" value="Triosephosphate isomerase (TIM)"/>
    <property type="match status" value="1"/>
</dbReference>
<dbReference type="PROSITE" id="PS00171">
    <property type="entry name" value="TIM_1"/>
    <property type="match status" value="1"/>
</dbReference>
<dbReference type="PROSITE" id="PS51440">
    <property type="entry name" value="TIM_2"/>
    <property type="match status" value="1"/>
</dbReference>
<gene>
    <name evidence="1" type="primary">tpiA</name>
    <name type="ordered locus">BCG_1499</name>
</gene>
<evidence type="ECO:0000255" key="1">
    <source>
        <dbReference type="HAMAP-Rule" id="MF_00147"/>
    </source>
</evidence>
<proteinExistence type="inferred from homology"/>
<feature type="chain" id="PRO_0000307503" description="Triosephosphate isomerase">
    <location>
        <begin position="1"/>
        <end position="261"/>
    </location>
</feature>
<feature type="active site" description="Electrophile" evidence="1">
    <location>
        <position position="100"/>
    </location>
</feature>
<feature type="active site" description="Proton acceptor" evidence="1">
    <location>
        <position position="172"/>
    </location>
</feature>
<feature type="binding site" evidence="1">
    <location>
        <begin position="10"/>
        <end position="12"/>
    </location>
    <ligand>
        <name>substrate</name>
    </ligand>
</feature>
<feature type="binding site" evidence="1">
    <location>
        <position position="178"/>
    </location>
    <ligand>
        <name>substrate</name>
    </ligand>
</feature>
<feature type="binding site" evidence="1">
    <location>
        <position position="218"/>
    </location>
    <ligand>
        <name>substrate</name>
    </ligand>
</feature>
<feature type="binding site" evidence="1">
    <location>
        <begin position="239"/>
        <end position="240"/>
    </location>
    <ligand>
        <name>substrate</name>
    </ligand>
</feature>
<keyword id="KW-0963">Cytoplasm</keyword>
<keyword id="KW-0312">Gluconeogenesis</keyword>
<keyword id="KW-0324">Glycolysis</keyword>
<keyword id="KW-0413">Isomerase</keyword>
<name>TPIS_MYCBP</name>
<comment type="function">
    <text evidence="1">Involved in the gluconeogenesis. Catalyzes stereospecifically the conversion of dihydroxyacetone phosphate (DHAP) to D-glyceraldehyde-3-phosphate (G3P).</text>
</comment>
<comment type="catalytic activity">
    <reaction evidence="1">
        <text>D-glyceraldehyde 3-phosphate = dihydroxyacetone phosphate</text>
        <dbReference type="Rhea" id="RHEA:18585"/>
        <dbReference type="ChEBI" id="CHEBI:57642"/>
        <dbReference type="ChEBI" id="CHEBI:59776"/>
        <dbReference type="EC" id="5.3.1.1"/>
    </reaction>
</comment>
<comment type="pathway">
    <text evidence="1">Carbohydrate biosynthesis; gluconeogenesis.</text>
</comment>
<comment type="pathway">
    <text evidence="1">Carbohydrate degradation; glycolysis; D-glyceraldehyde 3-phosphate from glycerone phosphate: step 1/1.</text>
</comment>
<comment type="subunit">
    <text evidence="1">Homodimer.</text>
</comment>
<comment type="subcellular location">
    <subcellularLocation>
        <location evidence="1">Cytoplasm</location>
    </subcellularLocation>
</comment>
<comment type="similarity">
    <text evidence="1">Belongs to the triosephosphate isomerase family.</text>
</comment>
<accession>A1KIM7</accession>